<proteinExistence type="evidence at protein level"/>
<reference key="1">
    <citation type="journal article" date="1993" name="Biochim. Biophys. Acta">
        <title>Isolation and characterization of cDNA clones and a genomic clone encoding rat mitochondrial adenine nucleotide translocator.</title>
        <authorList>
            <person name="Shinohara Y."/>
            <person name="Kamida M."/>
            <person name="Yamazaki N."/>
            <person name="Terada H."/>
        </authorList>
    </citation>
    <scope>NUCLEOTIDE SEQUENCE [MRNA]</scope>
    <scope>TISSUE SPECIFICITY</scope>
    <source>
        <strain>Sprague-Dawley</strain>
        <tissue>Liver</tissue>
    </source>
</reference>
<reference key="2">
    <citation type="journal article" date="2004" name="Genome Res.">
        <title>The status, quality, and expansion of the NIH full-length cDNA project: the Mammalian Gene Collection (MGC).</title>
        <authorList>
            <consortium name="The MGC Project Team"/>
        </authorList>
    </citation>
    <scope>NUCLEOTIDE SEQUENCE [LARGE SCALE MRNA]</scope>
    <source>
        <tissue>Pituitary</tissue>
    </source>
</reference>
<reference key="3">
    <citation type="submission" date="2006-08" db="UniProtKB">
        <authorList>
            <person name="Bienvenut W.V."/>
            <person name="von Kriegsheim A.F."/>
            <person name="Kolch W."/>
        </authorList>
    </citation>
    <scope>PROTEIN SEQUENCE OF 2-31; 34-43; 73-80 AND 273-280</scope>
    <scope>CLEAVAGE OF INITIATOR METHIONINE</scope>
    <scope>ACETYLATION AT THR-2</scope>
    <scope>IDENTIFICATION BY MASS SPECTROMETRY</scope>
    <source>
        <tissue>Pheochromocytoma</tissue>
    </source>
</reference>
<reference key="4">
    <citation type="journal article" date="2012" name="Nat. Commun.">
        <title>Quantitative maps of protein phosphorylation sites across 14 different rat organs and tissues.</title>
        <authorList>
            <person name="Lundby A."/>
            <person name="Secher A."/>
            <person name="Lage K."/>
            <person name="Nordsborg N.B."/>
            <person name="Dmytriyev A."/>
            <person name="Lundby C."/>
            <person name="Olsen J.V."/>
        </authorList>
    </citation>
    <scope>PHOSPHORYLATION [LARGE SCALE ANALYSIS] AT SER-7</scope>
    <scope>IDENTIFICATION BY MASS SPECTROMETRY [LARGE SCALE ANALYSIS]</scope>
</reference>
<reference key="5">
    <citation type="journal article" date="2019" name="J. Biol. Chem.">
        <title>Human FAM173A is a mitochondrial lysine-specific methyltransferase that targets adenine nucleotide translocase and affects mitochondrial respiration.</title>
        <authorList>
            <person name="Malecki J."/>
            <person name="Willemen H.L.D.M."/>
            <person name="Pinto R."/>
            <person name="Ho A.Y.Y."/>
            <person name="Moen A."/>
            <person name="Eijkelkamp N."/>
            <person name="Falnes P.O."/>
        </authorList>
    </citation>
    <scope>METHYLATION AT LYS-52</scope>
</reference>
<feature type="chain" id="PRO_0000423223" description="ADP/ATP translocase 2">
    <location>
        <begin position="1"/>
        <end position="298"/>
    </location>
</feature>
<feature type="initiator methionine" description="Removed; alternate" evidence="10">
    <location>
        <position position="1"/>
    </location>
</feature>
<feature type="chain" id="PRO_0000090582" description="ADP/ATP translocase 2, N-terminally processed">
    <location>
        <begin position="2"/>
        <end position="298"/>
    </location>
</feature>
<feature type="topological domain" description="Mitochondrial intermembrane" evidence="12">
    <location>
        <begin position="1"/>
        <end position="7"/>
    </location>
</feature>
<feature type="transmembrane region" description="Helical; Name=1" evidence="3">
    <location>
        <begin position="8"/>
        <end position="37"/>
    </location>
</feature>
<feature type="topological domain" description="Mitochondrial matrix" evidence="12">
    <location>
        <begin position="38"/>
        <end position="74"/>
    </location>
</feature>
<feature type="transmembrane region" description="Helical; Name=2" evidence="3">
    <location>
        <begin position="75"/>
        <end position="99"/>
    </location>
</feature>
<feature type="topological domain" description="Mitochondrial intermembrane" evidence="12">
    <location>
        <begin position="100"/>
        <end position="109"/>
    </location>
</feature>
<feature type="transmembrane region" description="Helical; Name=3" evidence="3">
    <location>
        <begin position="110"/>
        <end position="130"/>
    </location>
</feature>
<feature type="topological domain" description="Mitochondrial matrix" evidence="12">
    <location>
        <begin position="131"/>
        <end position="178"/>
    </location>
</feature>
<feature type="transmembrane region" description="Helical; Name=4" evidence="3">
    <location>
        <begin position="179"/>
        <end position="199"/>
    </location>
</feature>
<feature type="topological domain" description="Mitochondrial intermembrane" evidence="12">
    <location>
        <begin position="200"/>
        <end position="210"/>
    </location>
</feature>
<feature type="transmembrane region" description="Helical; Name=5" evidence="3">
    <location>
        <begin position="211"/>
        <end position="231"/>
    </location>
</feature>
<feature type="topological domain" description="Mitochondrial matrix" evidence="12">
    <location>
        <begin position="232"/>
        <end position="273"/>
    </location>
</feature>
<feature type="transmembrane region" description="Helical; Name=6" evidence="3">
    <location>
        <begin position="274"/>
        <end position="291"/>
    </location>
</feature>
<feature type="topological domain" description="Mitochondrial intermembrane" evidence="12">
    <location>
        <begin position="292"/>
        <end position="298"/>
    </location>
</feature>
<feature type="repeat" description="Solcar 1">
    <location>
        <begin position="6"/>
        <end position="98"/>
    </location>
</feature>
<feature type="repeat" description="Solcar 2">
    <location>
        <begin position="111"/>
        <end position="201"/>
    </location>
</feature>
<feature type="repeat" description="Solcar 3">
    <location>
        <begin position="212"/>
        <end position="297"/>
    </location>
</feature>
<feature type="region of interest" description="Important for transport activity" evidence="5">
    <location>
        <begin position="235"/>
        <end position="240"/>
    </location>
</feature>
<feature type="short sequence motif" description="Nucleotide carrier signature motif" evidence="3">
    <location>
        <begin position="235"/>
        <end position="240"/>
    </location>
</feature>
<feature type="binding site" evidence="3">
    <location>
        <position position="80"/>
    </location>
    <ligand>
        <name>ADP</name>
        <dbReference type="ChEBI" id="CHEBI:456216"/>
    </ligand>
</feature>
<feature type="binding site" evidence="3">
    <location>
        <position position="92"/>
    </location>
    <ligand>
        <name>ADP</name>
        <dbReference type="ChEBI" id="CHEBI:456216"/>
    </ligand>
</feature>
<feature type="binding site" evidence="3">
    <location>
        <position position="235"/>
    </location>
    <ligand>
        <name>ADP</name>
        <dbReference type="ChEBI" id="CHEBI:456216"/>
    </ligand>
</feature>
<feature type="modified residue" description="N-acetylmethionine" evidence="4">
    <location>
        <position position="1"/>
    </location>
</feature>
<feature type="modified residue" description="N-acetylthreonine; in ADP/ATP translocase 2, N-terminally processed" evidence="10">
    <location>
        <position position="2"/>
    </location>
</feature>
<feature type="modified residue" description="Phosphoserine" evidence="13">
    <location>
        <position position="7"/>
    </location>
</feature>
<feature type="modified residue" description="N6-malonyllysine" evidence="1">
    <location>
        <position position="23"/>
    </location>
</feature>
<feature type="modified residue" description="N6-succinyllysine" evidence="6">
    <location>
        <position position="43"/>
    </location>
</feature>
<feature type="modified residue" description="N6,N6,N6-trimethyllysine; alternate" evidence="8">
    <location>
        <position position="52"/>
    </location>
</feature>
<feature type="modified residue" description="N6,N6-dimethyllysine; alternate" evidence="4">
    <location>
        <position position="52"/>
    </location>
</feature>
<feature type="modified residue" description="N6-methyllysine; alternate" evidence="4">
    <location>
        <position position="52"/>
    </location>
</feature>
<feature type="modified residue" description="N6-malonyllysine" evidence="1">
    <location>
        <position position="92"/>
    </location>
</feature>
<feature type="modified residue" description="N6-malonyllysine" evidence="1">
    <location>
        <position position="96"/>
    </location>
</feature>
<feature type="modified residue" description="N6-acetyllysine; alternate" evidence="4">
    <location>
        <position position="105"/>
    </location>
</feature>
<feature type="modified residue" description="N6-succinyllysine; alternate" evidence="6">
    <location>
        <position position="105"/>
    </location>
</feature>
<feature type="modified residue" description="N6-acetyllysine; alternate" evidence="6">
    <location>
        <position position="147"/>
    </location>
</feature>
<feature type="modified residue" description="N6-malonyllysine; alternate" evidence="1">
    <location>
        <position position="147"/>
    </location>
</feature>
<feature type="modified residue" description="N6-methyllysine; alternate" evidence="4">
    <location>
        <position position="147"/>
    </location>
</feature>
<feature type="modified residue" description="N6-succinyllysine; alternate" evidence="6">
    <location>
        <position position="147"/>
    </location>
</feature>
<feature type="modified residue" description="N6-acetyllysine; alternate" evidence="6">
    <location>
        <position position="155"/>
    </location>
</feature>
<feature type="modified residue" description="N6-succinyllysine; alternate" evidence="6">
    <location>
        <position position="155"/>
    </location>
</feature>
<feature type="modified residue" description="N6-acetyllysine" evidence="4">
    <location>
        <position position="163"/>
    </location>
</feature>
<feature type="modified residue" description="N6-acetyllysine" evidence="6">
    <location>
        <position position="166"/>
    </location>
</feature>
<feature type="modified residue" description="N6-acetyllysine; alternate" evidence="6">
    <location>
        <position position="268"/>
    </location>
</feature>
<feature type="modified residue" description="N6-succinyllysine; alternate" evidence="6">
    <location>
        <position position="268"/>
    </location>
</feature>
<dbReference type="EMBL" id="D12771">
    <property type="protein sequence ID" value="BAA02238.1"/>
    <property type="molecule type" value="mRNA"/>
</dbReference>
<dbReference type="EMBL" id="BC059108">
    <property type="protein sequence ID" value="AAH59108.1"/>
    <property type="molecule type" value="mRNA"/>
</dbReference>
<dbReference type="PIR" id="I56602">
    <property type="entry name" value="I56602"/>
</dbReference>
<dbReference type="RefSeq" id="NP_476443.1">
    <property type="nucleotide sequence ID" value="NM_057102.2"/>
</dbReference>
<dbReference type="SMR" id="Q09073"/>
<dbReference type="BioGRID" id="247232">
    <property type="interactions" value="7"/>
</dbReference>
<dbReference type="CORUM" id="Q09073"/>
<dbReference type="FunCoup" id="Q09073">
    <property type="interactions" value="2175"/>
</dbReference>
<dbReference type="IntAct" id="Q09073">
    <property type="interactions" value="5"/>
</dbReference>
<dbReference type="MINT" id="Q09073"/>
<dbReference type="STRING" id="10116.ENSRNOP00000015913"/>
<dbReference type="CarbonylDB" id="Q09073"/>
<dbReference type="GlyGen" id="Q09073">
    <property type="glycosylation" value="1 site, 1 O-linked glycan (1 site)"/>
</dbReference>
<dbReference type="iPTMnet" id="Q09073"/>
<dbReference type="PhosphoSitePlus" id="Q09073"/>
<dbReference type="jPOST" id="Q09073"/>
<dbReference type="PaxDb" id="10116-ENSRNOP00000015913"/>
<dbReference type="Ensembl" id="ENSRNOT00000015085.7">
    <property type="protein sequence ID" value="ENSRNOP00000015913.3"/>
    <property type="gene ID" value="ENSRNOG00000039980.5"/>
</dbReference>
<dbReference type="GeneID" id="25176"/>
<dbReference type="KEGG" id="rno:25176"/>
<dbReference type="UCSC" id="RGD:620353">
    <property type="organism name" value="rat"/>
</dbReference>
<dbReference type="AGR" id="RGD:620353"/>
<dbReference type="CTD" id="292"/>
<dbReference type="RGD" id="620353">
    <property type="gene designation" value="Slc25a5"/>
</dbReference>
<dbReference type="eggNOG" id="KOG0749">
    <property type="taxonomic scope" value="Eukaryota"/>
</dbReference>
<dbReference type="GeneTree" id="ENSGT00940000154400"/>
<dbReference type="HOGENOM" id="CLU_015166_12_0_1"/>
<dbReference type="InParanoid" id="Q09073"/>
<dbReference type="OMA" id="NFACKEK"/>
<dbReference type="OrthoDB" id="270584at2759"/>
<dbReference type="PhylomeDB" id="Q09073"/>
<dbReference type="TreeFam" id="TF300743"/>
<dbReference type="Reactome" id="R-RNO-83936">
    <property type="pathway name" value="Transport of nucleosides and free purine and pyrimidine bases across the plasma membrane"/>
</dbReference>
<dbReference type="Reactome" id="R-RNO-9837999">
    <property type="pathway name" value="Mitochondrial protein degradation"/>
</dbReference>
<dbReference type="PRO" id="PR:Q09073"/>
<dbReference type="Proteomes" id="UP000002494">
    <property type="component" value="Chromosome X"/>
</dbReference>
<dbReference type="Bgee" id="ENSRNOG00000039980">
    <property type="expression patterns" value="Expressed in jejunum and 19 other cell types or tissues"/>
</dbReference>
<dbReference type="GO" id="GO:0016020">
    <property type="term" value="C:membrane"/>
    <property type="evidence" value="ECO:0000266"/>
    <property type="project" value="RGD"/>
</dbReference>
<dbReference type="GO" id="GO:0045121">
    <property type="term" value="C:membrane raft"/>
    <property type="evidence" value="ECO:0000314"/>
    <property type="project" value="CAFA"/>
</dbReference>
<dbReference type="GO" id="GO:0005743">
    <property type="term" value="C:mitochondrial inner membrane"/>
    <property type="evidence" value="ECO:0000314"/>
    <property type="project" value="RGD"/>
</dbReference>
<dbReference type="GO" id="GO:0042645">
    <property type="term" value="C:mitochondrial nucleoid"/>
    <property type="evidence" value="ECO:0000266"/>
    <property type="project" value="RGD"/>
</dbReference>
<dbReference type="GO" id="GO:0005757">
    <property type="term" value="C:mitochondrial permeability transition pore complex"/>
    <property type="evidence" value="ECO:0000250"/>
    <property type="project" value="UniProtKB"/>
</dbReference>
<dbReference type="GO" id="GO:0071817">
    <property type="term" value="C:MMXD complex"/>
    <property type="evidence" value="ECO:0000250"/>
    <property type="project" value="UniProtKB"/>
</dbReference>
<dbReference type="GO" id="GO:0000295">
    <property type="term" value="F:adenine nucleotide transmembrane transporter activity"/>
    <property type="evidence" value="ECO:0000266"/>
    <property type="project" value="RGD"/>
</dbReference>
<dbReference type="GO" id="GO:0005471">
    <property type="term" value="F:ATP:ADP antiporter activity"/>
    <property type="evidence" value="ECO:0000250"/>
    <property type="project" value="UniProtKB"/>
</dbReference>
<dbReference type="GO" id="GO:0017077">
    <property type="term" value="F:oxidative phosphorylation uncoupler activity"/>
    <property type="evidence" value="ECO:0000250"/>
    <property type="project" value="UniProtKB"/>
</dbReference>
<dbReference type="GO" id="GO:0015078">
    <property type="term" value="F:proton transmembrane transporter activity"/>
    <property type="evidence" value="ECO:0000266"/>
    <property type="project" value="RGD"/>
</dbReference>
<dbReference type="GO" id="GO:0031625">
    <property type="term" value="F:ubiquitin protein ligase binding"/>
    <property type="evidence" value="ECO:0000266"/>
    <property type="project" value="RGD"/>
</dbReference>
<dbReference type="GO" id="GO:1990845">
    <property type="term" value="P:adaptive thermogenesis"/>
    <property type="evidence" value="ECO:0000250"/>
    <property type="project" value="UniProtKB"/>
</dbReference>
<dbReference type="GO" id="GO:0051503">
    <property type="term" value="P:adenine nucleotide transport"/>
    <property type="evidence" value="ECO:0000266"/>
    <property type="project" value="RGD"/>
</dbReference>
<dbReference type="GO" id="GO:0030183">
    <property type="term" value="P:B cell differentiation"/>
    <property type="evidence" value="ECO:0000250"/>
    <property type="project" value="UniProtKB"/>
</dbReference>
<dbReference type="GO" id="GO:1990830">
    <property type="term" value="P:cellular response to leukemia inhibitory factor"/>
    <property type="evidence" value="ECO:0000266"/>
    <property type="project" value="RGD"/>
</dbReference>
<dbReference type="GO" id="GO:0007059">
    <property type="term" value="P:chromosome segregation"/>
    <property type="evidence" value="ECO:0007669"/>
    <property type="project" value="UniProtKB-KW"/>
</dbReference>
<dbReference type="GO" id="GO:0030218">
    <property type="term" value="P:erythrocyte differentiation"/>
    <property type="evidence" value="ECO:0000250"/>
    <property type="project" value="UniProtKB"/>
</dbReference>
<dbReference type="GO" id="GO:0140021">
    <property type="term" value="P:mitochondrial ADP transmembrane transport"/>
    <property type="evidence" value="ECO:0000250"/>
    <property type="project" value="UniProtKB"/>
</dbReference>
<dbReference type="GO" id="GO:1990544">
    <property type="term" value="P:mitochondrial ATP transmembrane transport"/>
    <property type="evidence" value="ECO:0000250"/>
    <property type="project" value="UniProtKB"/>
</dbReference>
<dbReference type="GO" id="GO:1901029">
    <property type="term" value="P:negative regulation of mitochondrial outer membrane permeabilization involved in apoptotic signaling pathway"/>
    <property type="evidence" value="ECO:0000250"/>
    <property type="project" value="UniProtKB"/>
</dbReference>
<dbReference type="GO" id="GO:0008284">
    <property type="term" value="P:positive regulation of cell population proliferation"/>
    <property type="evidence" value="ECO:0000250"/>
    <property type="project" value="UniProtKB"/>
</dbReference>
<dbReference type="GO" id="GO:1901526">
    <property type="term" value="P:positive regulation of mitophagy"/>
    <property type="evidence" value="ECO:0000250"/>
    <property type="project" value="UniProtKB"/>
</dbReference>
<dbReference type="GO" id="GO:0046902">
    <property type="term" value="P:regulation of mitochondrial membrane permeability"/>
    <property type="evidence" value="ECO:0000250"/>
    <property type="project" value="UniProtKB"/>
</dbReference>
<dbReference type="FunFam" id="1.50.40.10:FF:000002">
    <property type="entry name" value="Putative ADP/ATP translocase 2-like"/>
    <property type="match status" value="1"/>
</dbReference>
<dbReference type="Gene3D" id="1.50.40.10">
    <property type="entry name" value="Mitochondrial carrier domain"/>
    <property type="match status" value="1"/>
</dbReference>
<dbReference type="InterPro" id="IPR002113">
    <property type="entry name" value="ADT_euk_type"/>
</dbReference>
<dbReference type="InterPro" id="IPR002067">
    <property type="entry name" value="Mit_carrier"/>
</dbReference>
<dbReference type="InterPro" id="IPR018108">
    <property type="entry name" value="Mitochondrial_sb/sol_carrier"/>
</dbReference>
<dbReference type="InterPro" id="IPR023395">
    <property type="entry name" value="Mt_carrier_dom_sf"/>
</dbReference>
<dbReference type="PANTHER" id="PTHR45635">
    <property type="entry name" value="ADP,ATP CARRIER PROTEIN 1-RELATED-RELATED"/>
    <property type="match status" value="1"/>
</dbReference>
<dbReference type="PANTHER" id="PTHR45635:SF3">
    <property type="entry name" value="ADP_ATP TRANSLOCASE 2"/>
    <property type="match status" value="1"/>
</dbReference>
<dbReference type="Pfam" id="PF00153">
    <property type="entry name" value="Mito_carr"/>
    <property type="match status" value="3"/>
</dbReference>
<dbReference type="PRINTS" id="PR00927">
    <property type="entry name" value="ADPTRNSLCASE"/>
</dbReference>
<dbReference type="PRINTS" id="PR00926">
    <property type="entry name" value="MITOCARRIER"/>
</dbReference>
<dbReference type="SUPFAM" id="SSF103506">
    <property type="entry name" value="Mitochondrial carrier"/>
    <property type="match status" value="1"/>
</dbReference>
<dbReference type="PROSITE" id="PS50920">
    <property type="entry name" value="SOLCAR"/>
    <property type="match status" value="3"/>
</dbReference>
<keyword id="KW-0007">Acetylation</keyword>
<keyword id="KW-0050">Antiport</keyword>
<keyword id="KW-0159">Chromosome partition</keyword>
<keyword id="KW-0903">Direct protein sequencing</keyword>
<keyword id="KW-0472">Membrane</keyword>
<keyword id="KW-0488">Methylation</keyword>
<keyword id="KW-0496">Mitochondrion</keyword>
<keyword id="KW-0999">Mitochondrion inner membrane</keyword>
<keyword id="KW-0597">Phosphoprotein</keyword>
<keyword id="KW-1185">Reference proteome</keyword>
<keyword id="KW-0677">Repeat</keyword>
<keyword id="KW-0812">Transmembrane</keyword>
<keyword id="KW-1133">Transmembrane helix</keyword>
<keyword id="KW-0813">Transport</keyword>
<protein>
    <recommendedName>
        <fullName evidence="12">ADP/ATP translocase 2</fullName>
    </recommendedName>
    <alternativeName>
        <fullName evidence="4">ADP,ATP carrier protein 2</fullName>
    </alternativeName>
    <alternativeName>
        <fullName evidence="11">Adenine nucleotide translocator 2</fullName>
        <shortName evidence="11">ANT 2</shortName>
    </alternativeName>
    <alternativeName>
        <fullName evidence="12">Solute carrier family 25 member 5</fullName>
    </alternativeName>
    <component>
        <recommendedName>
            <fullName>ADP/ATP translocase 2, N-terminally processed</fullName>
        </recommendedName>
    </component>
</protein>
<evidence type="ECO:0000250" key="1"/>
<evidence type="ECO:0000250" key="2">
    <source>
        <dbReference type="UniProtKB" id="G2QNH0"/>
    </source>
</evidence>
<evidence type="ECO:0000250" key="3">
    <source>
        <dbReference type="UniProtKB" id="P02722"/>
    </source>
</evidence>
<evidence type="ECO:0000250" key="4">
    <source>
        <dbReference type="UniProtKB" id="P05141"/>
    </source>
</evidence>
<evidence type="ECO:0000250" key="5">
    <source>
        <dbReference type="UniProtKB" id="P12235"/>
    </source>
</evidence>
<evidence type="ECO:0000250" key="6">
    <source>
        <dbReference type="UniProtKB" id="P51881"/>
    </source>
</evidence>
<evidence type="ECO:0000255" key="7"/>
<evidence type="ECO:0000269" key="8">
    <source>
    </source>
</evidence>
<evidence type="ECO:0000269" key="9">
    <source>
    </source>
</evidence>
<evidence type="ECO:0000269" key="10">
    <source ref="3"/>
</evidence>
<evidence type="ECO:0000303" key="11">
    <source>
    </source>
</evidence>
<evidence type="ECO:0000305" key="12"/>
<evidence type="ECO:0007744" key="13">
    <source>
    </source>
</evidence>
<accession>Q09073</accession>
<organism>
    <name type="scientific">Rattus norvegicus</name>
    <name type="common">Rat</name>
    <dbReference type="NCBI Taxonomy" id="10116"/>
    <lineage>
        <taxon>Eukaryota</taxon>
        <taxon>Metazoa</taxon>
        <taxon>Chordata</taxon>
        <taxon>Craniata</taxon>
        <taxon>Vertebrata</taxon>
        <taxon>Euteleostomi</taxon>
        <taxon>Mammalia</taxon>
        <taxon>Eutheria</taxon>
        <taxon>Euarchontoglires</taxon>
        <taxon>Glires</taxon>
        <taxon>Rodentia</taxon>
        <taxon>Myomorpha</taxon>
        <taxon>Muroidea</taxon>
        <taxon>Muridae</taxon>
        <taxon>Murinae</taxon>
        <taxon>Rattus</taxon>
    </lineage>
</organism>
<gene>
    <name evidence="4" type="primary">Slc25a5</name>
    <name evidence="11" type="synonym">Ant2</name>
</gene>
<comment type="function">
    <text evidence="2 4 6">ADP:ATP antiporter that mediates import of ADP into the mitochondrial matrix for ATP synthesis, and export of ATP out to fuel the cell (By similarity). Cycles between the cytoplasmic-open state (c-state) and the matrix-open state (m-state): operates by the alternating access mechanism with a single substrate-binding site intermittently exposed to either the cytosolic (c-state) or matrix (m-state) side of the inner mitochondrial membrane (By similarity). In addition to its ADP:ATP antiporter activity, also involved in mitochondrial uncoupling and mitochondrial permeability transition pore (mPTP) activity. Plays a role in mitochondrial uncoupling by acting as a proton transporter: proton transport uncouples the proton flows via the electron transport chain and ATP synthase to reduce the efficiency of ATP production and cause mitochondrial thermogenesis. Proton transporter activity is inhibited by ADP:ATP antiporter activity, suggesting that SLC25A5/ANT2 acts as a master regulator of mitochondrial energy output by maintaining a delicate balance between ATP production (ADP:ATP antiporter activity) and thermogenesis (proton transporter activity). Proton transporter activity requires free fatty acids as cofactor, but does not transport it. Probably mediates mitochondrial uncoupling in tissues that do not express UCP1. Also plays a key role in mPTP opening, a non-specific pore that enables free passage of the mitochondrial membranes to solutes of up to 1.5 kDa, and which contributes to cell death. It is however unclear if SLC25A5/ANT2 constitutes a pore-forming component of mPTP or regulates it (By similarity). Acts as a regulator of mitophagy independently of ADP:ATP antiporter activity: promotes mitophagy via interaction with TIMM44, leading to inhibit the presequence translocase TIMM23, thereby promoting stabilization of PINK1 (By similarity). As part of the mitotic spindle-associated MMXD complex it may play a role in chromosome segregation (By similarity).</text>
</comment>
<comment type="catalytic activity">
    <reaction evidence="6">
        <text>ADP(in) + ATP(out) = ADP(out) + ATP(in)</text>
        <dbReference type="Rhea" id="RHEA:34999"/>
        <dbReference type="ChEBI" id="CHEBI:30616"/>
        <dbReference type="ChEBI" id="CHEBI:456216"/>
    </reaction>
</comment>
<comment type="catalytic activity">
    <reaction evidence="6">
        <text>H(+)(in) = H(+)(out)</text>
        <dbReference type="Rhea" id="RHEA:34979"/>
        <dbReference type="ChEBI" id="CHEBI:15378"/>
    </reaction>
</comment>
<comment type="activity regulation">
    <text evidence="2 6">The matrix-open state (m-state) is inhibited by the membrane-permeable bongkrekic acid (BKA). The cytoplasmic-open state (c-state) is inhibited by the membrane-impermeable toxic inhibitor carboxyatractyloside (CATR) (By similarity). Proton transporter activity is inhibited by ADP:ATP antiporter activity (By similarity).</text>
</comment>
<comment type="subunit">
    <text evidence="2 3 4 6">Monomer (By similarity). Component of the MMXD complex, which includes CIAO1, ERCC2, CIAO2B, MMS19 and SLC25A5/ANT2. Interacts with AK4 (By similarity). Interacts with TIMM44; leading to inhibit the presequence translocase TIMM23, thereby promoting stabilization of PINK1 (By similarity).</text>
</comment>
<comment type="subcellular location">
    <subcellularLocation>
        <location evidence="3">Mitochondrion inner membrane</location>
        <topology evidence="7">Multi-pass membrane protein</topology>
    </subcellularLocation>
    <subcellularLocation>
        <location evidence="4">Membrane</location>
        <topology evidence="7">Multi-pass membrane protein</topology>
    </subcellularLocation>
    <text evidence="4">May localize to non-mitochondrial membranes.</text>
</comment>
<comment type="tissue specificity">
    <text evidence="9">Present in kidney, brain, heart, liver and skeletal muscle.</text>
</comment>
<comment type="domain">
    <text evidence="3">The transmembrane helices are not perpendicular to the plane of the membrane, but cross the membrane at an angle. Odd-numbered transmembrane helices exhibit a sharp kink, due to the presence of a conserved proline residue.</text>
</comment>
<comment type="PTM">
    <text evidence="4">Trimethylated by ANTKMT at Lys-52.</text>
</comment>
<comment type="similarity">
    <text evidence="12">Belongs to the mitochondrial carrier (TC 2.A.29) family.</text>
</comment>
<sequence length="298" mass="32901">MTDAAVSFAKDFLAGGVAAAISKTAVAPIERVKLLLQVQHASKQITADKQYKGIIDCVVRIPKEQGVLSFWRGNLANVIRYFPTQALNFAFKDKYKQIFLGGVDKRTQFWRYFAGNLASGGAAGATSLCFVYPLDFARTRLAADVGKAGAEREFKGLGDCLVKIYKSDGIKGLYQGFNVSVQGIIIYRAAYFGIYDTAKGMLPDPKNTHIFISWMIAQSVTAVAGLTSYPFDTVRRRMMMQSGRKGTDIMYTGTLDCWRKIARDEGGKAFFKGAWSNVLRGMGGAFVLVLYDEIKKYT</sequence>
<name>ADT2_RAT</name>